<gene>
    <name type="primary">swrC</name>
    <name type="ordered locus">BSU06710</name>
</gene>
<comment type="function">
    <text evidence="1 2">Required for self-resistance to surfactin, an antimicrobial lipopeptide surfactant produced by B.subtilis. Also required for swarming motility.</text>
</comment>
<comment type="interaction">
    <interactant intactId="EBI-5242442">
        <id>O31501</id>
    </interactant>
    <interactant intactId="EBI-5242915">
        <id>P96706</id>
        <label>ydgH</label>
    </interactant>
    <organismsDiffer>false</organismsDiffer>
    <experiments>3</experiments>
</comment>
<comment type="interaction">
    <interactant intactId="EBI-5242442">
        <id>O31501</id>
    </interactant>
    <interactant intactId="EBI-5242593">
        <id>O07523</id>
        <label>yhaP</label>
    </interactant>
    <organismsDiffer>false</organismsDiffer>
    <experiments>4</experiments>
</comment>
<comment type="interaction">
    <interactant intactId="EBI-5242442">
        <id>O31501</id>
    </interactant>
    <interactant intactId="EBI-5242987">
        <id>O34755</id>
        <label>ykoT</label>
    </interactant>
    <organismsDiffer>false</organismsDiffer>
    <experiments>4</experiments>
</comment>
<comment type="interaction">
    <interactant intactId="EBI-5242442">
        <id>O31501</id>
    </interactant>
    <interactant intactId="EBI-5242682">
        <id>P45920</id>
        <label>yqbD</label>
    </interactant>
    <organismsDiffer>false</organismsDiffer>
    <experiments>3</experiments>
</comment>
<comment type="interaction">
    <interactant intactId="EBI-5242442">
        <id>O31501</id>
    </interactant>
    <interactant intactId="EBI-5243080">
        <id>P96722</id>
        <label>ywqJ</label>
    </interactant>
    <organismsDiffer>false</organismsDiffer>
    <experiments>3</experiments>
</comment>
<comment type="induction">
    <text>Not induced by surfactin.</text>
</comment>
<comment type="miscellaneous">
    <text>A SwrC-deficient strain is susceptible to acriflavine and ethidium bromide, and showed severer growth inhibition as surfactin concentration increased up to 100ug/ml.</text>
</comment>
<comment type="similarity">
    <text evidence="3">Belongs to the resistance-nodulation-cell division (RND) (TC 2.A.6) family.</text>
</comment>
<reference key="1">
    <citation type="journal article" date="1997" name="Nature">
        <title>The complete genome sequence of the Gram-positive bacterium Bacillus subtilis.</title>
        <authorList>
            <person name="Kunst F."/>
            <person name="Ogasawara N."/>
            <person name="Moszer I."/>
            <person name="Albertini A.M."/>
            <person name="Alloni G."/>
            <person name="Azevedo V."/>
            <person name="Bertero M.G."/>
            <person name="Bessieres P."/>
            <person name="Bolotin A."/>
            <person name="Borchert S."/>
            <person name="Borriss R."/>
            <person name="Boursier L."/>
            <person name="Brans A."/>
            <person name="Braun M."/>
            <person name="Brignell S.C."/>
            <person name="Bron S."/>
            <person name="Brouillet S."/>
            <person name="Bruschi C.V."/>
            <person name="Caldwell B."/>
            <person name="Capuano V."/>
            <person name="Carter N.M."/>
            <person name="Choi S.-K."/>
            <person name="Codani J.-J."/>
            <person name="Connerton I.F."/>
            <person name="Cummings N.J."/>
            <person name="Daniel R.A."/>
            <person name="Denizot F."/>
            <person name="Devine K.M."/>
            <person name="Duesterhoeft A."/>
            <person name="Ehrlich S.D."/>
            <person name="Emmerson P.T."/>
            <person name="Entian K.-D."/>
            <person name="Errington J."/>
            <person name="Fabret C."/>
            <person name="Ferrari E."/>
            <person name="Foulger D."/>
            <person name="Fritz C."/>
            <person name="Fujita M."/>
            <person name="Fujita Y."/>
            <person name="Fuma S."/>
            <person name="Galizzi A."/>
            <person name="Galleron N."/>
            <person name="Ghim S.-Y."/>
            <person name="Glaser P."/>
            <person name="Goffeau A."/>
            <person name="Golightly E.J."/>
            <person name="Grandi G."/>
            <person name="Guiseppi G."/>
            <person name="Guy B.J."/>
            <person name="Haga K."/>
            <person name="Haiech J."/>
            <person name="Harwood C.R."/>
            <person name="Henaut A."/>
            <person name="Hilbert H."/>
            <person name="Holsappel S."/>
            <person name="Hosono S."/>
            <person name="Hullo M.-F."/>
            <person name="Itaya M."/>
            <person name="Jones L.-M."/>
            <person name="Joris B."/>
            <person name="Karamata D."/>
            <person name="Kasahara Y."/>
            <person name="Klaerr-Blanchard M."/>
            <person name="Klein C."/>
            <person name="Kobayashi Y."/>
            <person name="Koetter P."/>
            <person name="Koningstein G."/>
            <person name="Krogh S."/>
            <person name="Kumano M."/>
            <person name="Kurita K."/>
            <person name="Lapidus A."/>
            <person name="Lardinois S."/>
            <person name="Lauber J."/>
            <person name="Lazarevic V."/>
            <person name="Lee S.-M."/>
            <person name="Levine A."/>
            <person name="Liu H."/>
            <person name="Masuda S."/>
            <person name="Mauel C."/>
            <person name="Medigue C."/>
            <person name="Medina N."/>
            <person name="Mellado R.P."/>
            <person name="Mizuno M."/>
            <person name="Moestl D."/>
            <person name="Nakai S."/>
            <person name="Noback M."/>
            <person name="Noone D."/>
            <person name="O'Reilly M."/>
            <person name="Ogawa K."/>
            <person name="Ogiwara A."/>
            <person name="Oudega B."/>
            <person name="Park S.-H."/>
            <person name="Parro V."/>
            <person name="Pohl T.M."/>
            <person name="Portetelle D."/>
            <person name="Porwollik S."/>
            <person name="Prescott A.M."/>
            <person name="Presecan E."/>
            <person name="Pujic P."/>
            <person name="Purnelle B."/>
            <person name="Rapoport G."/>
            <person name="Rey M."/>
            <person name="Reynolds S."/>
            <person name="Rieger M."/>
            <person name="Rivolta C."/>
            <person name="Rocha E."/>
            <person name="Roche B."/>
            <person name="Rose M."/>
            <person name="Sadaie Y."/>
            <person name="Sato T."/>
            <person name="Scanlan E."/>
            <person name="Schleich S."/>
            <person name="Schroeter R."/>
            <person name="Scoffone F."/>
            <person name="Sekiguchi J."/>
            <person name="Sekowska A."/>
            <person name="Seror S.J."/>
            <person name="Serror P."/>
            <person name="Shin B.-S."/>
            <person name="Soldo B."/>
            <person name="Sorokin A."/>
            <person name="Tacconi E."/>
            <person name="Takagi T."/>
            <person name="Takahashi H."/>
            <person name="Takemaru K."/>
            <person name="Takeuchi M."/>
            <person name="Tamakoshi A."/>
            <person name="Tanaka T."/>
            <person name="Terpstra P."/>
            <person name="Tognoni A."/>
            <person name="Tosato V."/>
            <person name="Uchiyama S."/>
            <person name="Vandenbol M."/>
            <person name="Vannier F."/>
            <person name="Vassarotti A."/>
            <person name="Viari A."/>
            <person name="Wambutt R."/>
            <person name="Wedler E."/>
            <person name="Wedler H."/>
            <person name="Weitzenegger T."/>
            <person name="Winters P."/>
            <person name="Wipat A."/>
            <person name="Yamamoto H."/>
            <person name="Yamane K."/>
            <person name="Yasumoto K."/>
            <person name="Yata K."/>
            <person name="Yoshida K."/>
            <person name="Yoshikawa H.-F."/>
            <person name="Zumstein E."/>
            <person name="Yoshikawa H."/>
            <person name="Danchin A."/>
        </authorList>
    </citation>
    <scope>NUCLEOTIDE SEQUENCE [LARGE SCALE GENOMIC DNA]</scope>
    <source>
        <strain>168</strain>
    </source>
</reference>
<reference key="2">
    <citation type="journal article" date="2001" name="Antimicrob. Agents Chemother.">
        <title>Gene yerP, involved in surfactin self-resistance in Bacillus subtilis.</title>
        <authorList>
            <person name="Tsuge K."/>
            <person name="Ohata Y."/>
            <person name="Shoda M."/>
        </authorList>
    </citation>
    <scope>ROLE IN SURFACTIN RESISTANCE</scope>
    <scope>DETERMINATION OF THE TRANSCRIPTIONAL START SITE</scope>
    <source>
        <strain>168</strain>
    </source>
</reference>
<reference key="3">
    <citation type="journal article" date="2004" name="Mol. Microbiol.">
        <title>Genes governing swarming in Bacillus subtilis and evidence for a phase variation mechanism controlling surface motility.</title>
        <authorList>
            <person name="Kearns D.B."/>
            <person name="Chu F."/>
            <person name="Rudner R."/>
            <person name="Losick R."/>
        </authorList>
    </citation>
    <scope>ROLE IN SWARMING MOTILITY</scope>
    <source>
        <strain>168</strain>
        <strain>168 / PY79</strain>
        <strain>3610</strain>
    </source>
</reference>
<organism>
    <name type="scientific">Bacillus subtilis (strain 168)</name>
    <dbReference type="NCBI Taxonomy" id="224308"/>
    <lineage>
        <taxon>Bacteria</taxon>
        <taxon>Bacillati</taxon>
        <taxon>Bacillota</taxon>
        <taxon>Bacilli</taxon>
        <taxon>Bacillales</taxon>
        <taxon>Bacillaceae</taxon>
        <taxon>Bacillus</taxon>
    </lineage>
</organism>
<dbReference type="EMBL" id="AL009126">
    <property type="protein sequence ID" value="CAB12491.2"/>
    <property type="molecule type" value="Genomic_DNA"/>
</dbReference>
<dbReference type="PIR" id="E69795">
    <property type="entry name" value="E69795"/>
</dbReference>
<dbReference type="RefSeq" id="NP_388553.1">
    <property type="nucleotide sequence ID" value="NC_000964.3"/>
</dbReference>
<dbReference type="SMR" id="O31501"/>
<dbReference type="FunCoup" id="O31501">
    <property type="interactions" value="429"/>
</dbReference>
<dbReference type="IntAct" id="O31501">
    <property type="interactions" value="63"/>
</dbReference>
<dbReference type="STRING" id="224308.BSU06710"/>
<dbReference type="jPOST" id="O31501"/>
<dbReference type="PaxDb" id="224308-BSU06710"/>
<dbReference type="EnsemblBacteria" id="CAB12491">
    <property type="protein sequence ID" value="CAB12491"/>
    <property type="gene ID" value="BSU_06710"/>
</dbReference>
<dbReference type="GeneID" id="938055"/>
<dbReference type="KEGG" id="bsu:BSU06710"/>
<dbReference type="PATRIC" id="fig|224308.179.peg.729"/>
<dbReference type="eggNOG" id="COG0841">
    <property type="taxonomic scope" value="Bacteria"/>
</dbReference>
<dbReference type="InParanoid" id="O31501"/>
<dbReference type="OrthoDB" id="9757876at2"/>
<dbReference type="BioCyc" id="BSUB:BSU06710-MONOMER"/>
<dbReference type="Proteomes" id="UP000001570">
    <property type="component" value="Chromosome"/>
</dbReference>
<dbReference type="GO" id="GO:0005886">
    <property type="term" value="C:plasma membrane"/>
    <property type="evidence" value="ECO:0000318"/>
    <property type="project" value="GO_Central"/>
</dbReference>
<dbReference type="GO" id="GO:0042910">
    <property type="term" value="F:xenobiotic transmembrane transporter activity"/>
    <property type="evidence" value="ECO:0000318"/>
    <property type="project" value="GO_Central"/>
</dbReference>
<dbReference type="GO" id="GO:0046677">
    <property type="term" value="P:response to antibiotic"/>
    <property type="evidence" value="ECO:0007669"/>
    <property type="project" value="UniProtKB-KW"/>
</dbReference>
<dbReference type="Gene3D" id="3.30.70.1430">
    <property type="entry name" value="Multidrug efflux transporter AcrB pore domain"/>
    <property type="match status" value="2"/>
</dbReference>
<dbReference type="Gene3D" id="3.30.70.1440">
    <property type="entry name" value="Multidrug efflux transporter AcrB pore domain"/>
    <property type="match status" value="1"/>
</dbReference>
<dbReference type="Gene3D" id="3.30.70.1320">
    <property type="entry name" value="Multidrug efflux transporter AcrB pore domain like"/>
    <property type="match status" value="2"/>
</dbReference>
<dbReference type="Gene3D" id="3.30.2090.10">
    <property type="entry name" value="Multidrug efflux transporter AcrB TolC docking domain, DN and DC subdomains"/>
    <property type="match status" value="3"/>
</dbReference>
<dbReference type="Gene3D" id="1.20.1640.10">
    <property type="entry name" value="Multidrug efflux transporter AcrB transmembrane domain"/>
    <property type="match status" value="3"/>
</dbReference>
<dbReference type="InterPro" id="IPR027463">
    <property type="entry name" value="AcrB_DN_DC_subdom"/>
</dbReference>
<dbReference type="InterPro" id="IPR001036">
    <property type="entry name" value="Acrflvin-R"/>
</dbReference>
<dbReference type="PANTHER" id="PTHR32063">
    <property type="match status" value="1"/>
</dbReference>
<dbReference type="PANTHER" id="PTHR32063:SF0">
    <property type="entry name" value="SWARMING MOTILITY PROTEIN SWRC"/>
    <property type="match status" value="1"/>
</dbReference>
<dbReference type="Pfam" id="PF00873">
    <property type="entry name" value="ACR_tran"/>
    <property type="match status" value="1"/>
</dbReference>
<dbReference type="PRINTS" id="PR00702">
    <property type="entry name" value="ACRIFLAVINRP"/>
</dbReference>
<dbReference type="SUPFAM" id="SSF82693">
    <property type="entry name" value="Multidrug efflux transporter AcrB pore domain, PN1, PN2, PC1 and PC2 subdomains"/>
    <property type="match status" value="2"/>
</dbReference>
<dbReference type="SUPFAM" id="SSF82714">
    <property type="entry name" value="Multidrug efflux transporter AcrB TolC docking domain, DN and DC subdomains"/>
    <property type="match status" value="2"/>
</dbReference>
<dbReference type="SUPFAM" id="SSF82866">
    <property type="entry name" value="Multidrug efflux transporter AcrB transmembrane domain"/>
    <property type="match status" value="2"/>
</dbReference>
<protein>
    <recommendedName>
        <fullName>Swarming motility protein SwrC</fullName>
    </recommendedName>
</protein>
<proteinExistence type="evidence at protein level"/>
<sequence>MNHVINFVLKNKFAVWLMTIIVTAAGLYAGMNMKQESIPDVNMPYLTISTTYPGATPSQVADEVTKPVEQAVQNLDGVSVVTSTSYENASSVMIEYDYEKDMDKAKTEAAEALENVNLPDDAKDPEISRYSLNSFPILTLSVSSDKDNLQELTKQVEDSLVSKLEGIEGVASVQVSGQQVEEVEFSFKEDKLKEYGLDEDTVKQVIQGSDVTTPLGLYTFGNEEKSVVVSGDIETIKDLKNMRIPTASASSAGSSAASQAGAQSAQAAQSAQAAAQVQQSASTAVPTVKLSDIATIKDVKKAESVSRTNGKDSIGINIVKANDANTVEVADDVKAELKKFKEDHKGFNYSATLDMAEPITQSVDTMLSKAIFGAIFAIVIILLFLRDIKSTLISVVSIPLSLLIALLVLQQLDITLNIMTLGAMTVAIGRVVDDSIVVIENIYRRMRLKDEPLRGKALVREATKEMFKPIMSSTIVTIAVFLPLALVGGQIGELFIPFALTIVFALAASLVISITLVPMLAHSLFKKSLTGAPIKAKEHKPGRLANIYKKVLNWALSHKWITSIIAVLMLLGSLFLVPLIGASYLPSEEEKTMQLTYSPEPGETKKEAENEAEKAEKILLDRKHVDTVQYSLGSGSPLAGGDSNGALFYIKYESDTPDFDKEKDNVLKEIQKQSDRGEWKSQDFSSSGNNNELTYYVYGDSENDIKDTVKDIEKIMKDEKDLKNVNSGLSSTYDEYTFVADQEKLSKLGLTASQISQALMSQTSQEPLTTVKKDGKELDVNIKTEKDEYKSVKDLENKKITSATGQEVKIGDVAKVKEGSTSDTVSKRDGKVYADVTGEVTSDNVTAVSAAIQKKIDKLDHPDNVSIDTGGVSADIADSFTKLGLAMLAAIAIVYLVLVITFGGALAPFAILFSLPFTVIGALVGLYVSGETISLNAMIGMLMLIGIVVTNAIVLIDRVIHKEAEGLSTREALLEAGSTRLRPILMTAIATIGALIPLALGFEGGSQVISKGLGVTVIGGLISSTLLTLLIVPIVYEVLAKFRKKKPGTEEE</sequence>
<evidence type="ECO:0000269" key="1">
    <source>
    </source>
</evidence>
<evidence type="ECO:0000269" key="2">
    <source>
    </source>
</evidence>
<evidence type="ECO:0000305" key="3"/>
<feature type="chain" id="PRO_0000161847" description="Swarming motility protein SwrC">
    <location>
        <begin position="1"/>
        <end position="1052"/>
    </location>
</feature>
<name>SWRC_BACSU</name>
<keyword id="KW-0046">Antibiotic resistance</keyword>
<keyword id="KW-1185">Reference proteome</keyword>
<accession>O31501</accession>